<comment type="subcellular location">
    <subcellularLocation>
        <location evidence="3">Secreted</location>
    </subcellularLocation>
</comment>
<comment type="similarity">
    <text evidence="3">Belongs to the 'GDSL' lipolytic enzyme family.</text>
</comment>
<comment type="sequence caution" evidence="3">
    <conflict type="frameshift">
        <sequence resource="EMBL-CDS" id="AAD24834"/>
    </conflict>
</comment>
<comment type="sequence caution" evidence="3">
    <conflict type="frameshift">
        <sequence resource="EMBL-CDS" id="AEC08559"/>
    </conflict>
</comment>
<sequence>MSTSKAITLTLFITTTLLASCDAAANATTKPLFPAILIFGDSTVDTGNNNYPLPTIFRAEHFPYGMDLPDGKANGRFSNGKLISDIIATKLNIKEFIPPFLQPNLSDQDILTGVCFASAGAGYDDLTSLSTQAIRVSEQPNMFKSYIARLKGIVGDKKAMEIINNAFVVVSAGPNDFILNYYDIPSRRLEYPFISGYQDFILKRLENFVRELYSLGVRNVLVGGLPPMGCLPIHMTAKFRNIFRFCLEHHNKDSVLYNEKLQKLLPQIEASLPGSKFLYADVYNPMMEMIQNPSKYGFKETKRGCCGTGFLETSFMCNVFSPVCQNRSEFMFFDSIHPSEATYNVIGNRLDPLIRGKFQA</sequence>
<dbReference type="EC" id="3.1.1.-"/>
<dbReference type="EMBL" id="AC007071">
    <property type="protein sequence ID" value="AAD24834.2"/>
    <property type="status" value="ALT_FRAME"/>
    <property type="molecule type" value="Genomic_DNA"/>
</dbReference>
<dbReference type="EMBL" id="CP002685">
    <property type="protein sequence ID" value="AEC08559.1"/>
    <property type="status" value="ALT_FRAME"/>
    <property type="molecule type" value="Genomic_DNA"/>
</dbReference>
<dbReference type="PIR" id="B84722">
    <property type="entry name" value="B84722"/>
</dbReference>
<dbReference type="RefSeq" id="NP_029729.1">
    <property type="nucleotide sequence ID" value="NM_128712.2"/>
</dbReference>
<dbReference type="SMR" id="Q9SIQ2"/>
<dbReference type="FunCoup" id="Q9SIQ2">
    <property type="interactions" value="107"/>
</dbReference>
<dbReference type="STRING" id="3702.Q9SIQ2"/>
<dbReference type="GlyGen" id="Q9SIQ2">
    <property type="glycosylation" value="3 sites"/>
</dbReference>
<dbReference type="PeptideAtlas" id="Q9SIQ2"/>
<dbReference type="GeneID" id="817713"/>
<dbReference type="KEGG" id="ath:AT2G31550"/>
<dbReference type="Araport" id="AT2G31550"/>
<dbReference type="TAIR" id="AT2G31550"/>
<dbReference type="InParanoid" id="Q9SIQ2"/>
<dbReference type="PhylomeDB" id="Q9SIQ2"/>
<dbReference type="PRO" id="PR:Q9SIQ2"/>
<dbReference type="Proteomes" id="UP000006548">
    <property type="component" value="Chromosome 2"/>
</dbReference>
<dbReference type="ExpressionAtlas" id="Q9SIQ2">
    <property type="expression patterns" value="baseline and differential"/>
</dbReference>
<dbReference type="GO" id="GO:0005576">
    <property type="term" value="C:extracellular region"/>
    <property type="evidence" value="ECO:0007669"/>
    <property type="project" value="UniProtKB-SubCell"/>
</dbReference>
<dbReference type="GO" id="GO:0016788">
    <property type="term" value="F:hydrolase activity, acting on ester bonds"/>
    <property type="evidence" value="ECO:0007669"/>
    <property type="project" value="InterPro"/>
</dbReference>
<dbReference type="GO" id="GO:0016042">
    <property type="term" value="P:lipid catabolic process"/>
    <property type="evidence" value="ECO:0007669"/>
    <property type="project" value="UniProtKB-KW"/>
</dbReference>
<dbReference type="CDD" id="cd01837">
    <property type="entry name" value="SGNH_plant_lipase_like"/>
    <property type="match status" value="1"/>
</dbReference>
<dbReference type="FunFam" id="3.40.50.1110:FF:000003">
    <property type="entry name" value="GDSL esterase/lipase APG"/>
    <property type="match status" value="1"/>
</dbReference>
<dbReference type="Gene3D" id="3.40.50.1110">
    <property type="entry name" value="SGNH hydrolase"/>
    <property type="match status" value="1"/>
</dbReference>
<dbReference type="InterPro" id="IPR001087">
    <property type="entry name" value="GDSL"/>
</dbReference>
<dbReference type="InterPro" id="IPR050592">
    <property type="entry name" value="GDSL_lipolytic_enzyme"/>
</dbReference>
<dbReference type="InterPro" id="IPR036514">
    <property type="entry name" value="SGNH_hydro_sf"/>
</dbReference>
<dbReference type="InterPro" id="IPR035669">
    <property type="entry name" value="SGNH_plant_lipase-like"/>
</dbReference>
<dbReference type="PANTHER" id="PTHR45642">
    <property type="entry name" value="GDSL ESTERASE/LIPASE EXL3"/>
    <property type="match status" value="1"/>
</dbReference>
<dbReference type="PANTHER" id="PTHR45642:SF30">
    <property type="entry name" value="SGNH HYDROLASE-TYPE ESTERASE DOMAIN-CONTAINING PROTEIN"/>
    <property type="match status" value="1"/>
</dbReference>
<dbReference type="Pfam" id="PF00657">
    <property type="entry name" value="Lipase_GDSL"/>
    <property type="match status" value="1"/>
</dbReference>
<dbReference type="SUPFAM" id="SSF52266">
    <property type="entry name" value="SGNH hydrolase"/>
    <property type="match status" value="1"/>
</dbReference>
<keyword id="KW-0325">Glycoprotein</keyword>
<keyword id="KW-0378">Hydrolase</keyword>
<keyword id="KW-0442">Lipid degradation</keyword>
<keyword id="KW-0443">Lipid metabolism</keyword>
<keyword id="KW-1185">Reference proteome</keyword>
<keyword id="KW-0964">Secreted</keyword>
<keyword id="KW-0732">Signal</keyword>
<proteinExistence type="inferred from homology"/>
<evidence type="ECO:0000250" key="1"/>
<evidence type="ECO:0000255" key="2"/>
<evidence type="ECO:0000305" key="3"/>
<accession>Q9SIQ2</accession>
<accession>F4IQV9</accession>
<reference key="1">
    <citation type="journal article" date="1999" name="Nature">
        <title>Sequence and analysis of chromosome 2 of the plant Arabidopsis thaliana.</title>
        <authorList>
            <person name="Lin X."/>
            <person name="Kaul S."/>
            <person name="Rounsley S.D."/>
            <person name="Shea T.P."/>
            <person name="Benito M.-I."/>
            <person name="Town C.D."/>
            <person name="Fujii C.Y."/>
            <person name="Mason T.M."/>
            <person name="Bowman C.L."/>
            <person name="Barnstead M.E."/>
            <person name="Feldblyum T.V."/>
            <person name="Buell C.R."/>
            <person name="Ketchum K.A."/>
            <person name="Lee J.J."/>
            <person name="Ronning C.M."/>
            <person name="Koo H.L."/>
            <person name="Moffat K.S."/>
            <person name="Cronin L.A."/>
            <person name="Shen M."/>
            <person name="Pai G."/>
            <person name="Van Aken S."/>
            <person name="Umayam L."/>
            <person name="Tallon L.J."/>
            <person name="Gill J.E."/>
            <person name="Adams M.D."/>
            <person name="Carrera A.J."/>
            <person name="Creasy T.H."/>
            <person name="Goodman H.M."/>
            <person name="Somerville C.R."/>
            <person name="Copenhaver G.P."/>
            <person name="Preuss D."/>
            <person name="Nierman W.C."/>
            <person name="White O."/>
            <person name="Eisen J.A."/>
            <person name="Salzberg S.L."/>
            <person name="Fraser C.M."/>
            <person name="Venter J.C."/>
        </authorList>
    </citation>
    <scope>NUCLEOTIDE SEQUENCE [LARGE SCALE GENOMIC DNA]</scope>
    <source>
        <strain>cv. Columbia</strain>
    </source>
</reference>
<reference key="2">
    <citation type="journal article" date="2017" name="Plant J.">
        <title>Araport11: a complete reannotation of the Arabidopsis thaliana reference genome.</title>
        <authorList>
            <person name="Cheng C.Y."/>
            <person name="Krishnakumar V."/>
            <person name="Chan A.P."/>
            <person name="Thibaud-Nissen F."/>
            <person name="Schobel S."/>
            <person name="Town C.D."/>
        </authorList>
    </citation>
    <scope>GENOME REANNOTATION</scope>
    <source>
        <strain>cv. Columbia</strain>
    </source>
</reference>
<reference key="3">
    <citation type="journal article" date="2004" name="Prog. Lipid Res.">
        <title>GDSL family of serine esterases/lipases.</title>
        <authorList>
            <person name="Akoh C.C."/>
            <person name="Lee G.-C."/>
            <person name="Liaw Y.-C."/>
            <person name="Huang T.-H."/>
            <person name="Shaw J.-F."/>
        </authorList>
    </citation>
    <scope>REVIEW</scope>
</reference>
<reference key="4">
    <citation type="journal article" date="2008" name="Pak. J. Biol. Sci.">
        <title>Sequence analysis of GDSL lipase gene family in Arabidopsis thaliana.</title>
        <authorList>
            <person name="Ling H."/>
        </authorList>
    </citation>
    <scope>GENE FAMILY</scope>
</reference>
<feature type="signal peptide" evidence="2">
    <location>
        <begin position="1"/>
        <end position="27"/>
    </location>
</feature>
<feature type="chain" id="PRO_0000367385" description="GDSL esterase/lipase At2g31550">
    <location>
        <begin position="28"/>
        <end position="360"/>
    </location>
</feature>
<feature type="active site" description="Nucleophile" evidence="1">
    <location>
        <position position="42"/>
    </location>
</feature>
<feature type="active site" evidence="1">
    <location>
        <position position="334"/>
    </location>
</feature>
<feature type="active site" evidence="1">
    <location>
        <position position="337"/>
    </location>
</feature>
<feature type="glycosylation site" description="N-linked (GlcNAc...) asparagine" evidence="2">
    <location>
        <position position="26"/>
    </location>
</feature>
<feature type="glycosylation site" description="N-linked (GlcNAc...) asparagine" evidence="2">
    <location>
        <position position="104"/>
    </location>
</feature>
<feature type="glycosylation site" description="N-linked (GlcNAc...) asparagine" evidence="2">
    <location>
        <position position="326"/>
    </location>
</feature>
<organism>
    <name type="scientific">Arabidopsis thaliana</name>
    <name type="common">Mouse-ear cress</name>
    <dbReference type="NCBI Taxonomy" id="3702"/>
    <lineage>
        <taxon>Eukaryota</taxon>
        <taxon>Viridiplantae</taxon>
        <taxon>Streptophyta</taxon>
        <taxon>Embryophyta</taxon>
        <taxon>Tracheophyta</taxon>
        <taxon>Spermatophyta</taxon>
        <taxon>Magnoliopsida</taxon>
        <taxon>eudicotyledons</taxon>
        <taxon>Gunneridae</taxon>
        <taxon>Pentapetalae</taxon>
        <taxon>rosids</taxon>
        <taxon>malvids</taxon>
        <taxon>Brassicales</taxon>
        <taxon>Brassicaceae</taxon>
        <taxon>Camelineae</taxon>
        <taxon>Arabidopsis</taxon>
    </lineage>
</organism>
<name>GDL44_ARATH</name>
<gene>
    <name type="ordered locus">At2g31550</name>
    <name type="ORF">T9H9.7</name>
</gene>
<protein>
    <recommendedName>
        <fullName>GDSL esterase/lipase At2g31550</fullName>
        <ecNumber>3.1.1.-</ecNumber>
    </recommendedName>
    <alternativeName>
        <fullName>Extracellular lipase At2g31550</fullName>
    </alternativeName>
</protein>